<accession>Q80Z24</accession>
<accession>Q3UHQ8</accession>
<accession>Q80T70</accession>
<reference key="1">
    <citation type="journal article" date="2005" name="Mol. Cell. Neurosci.">
        <title>Neurotractin/kilon promotes neurite outgrowth and is expressed on reactive astrocytes after entorhinal cortex lesion.</title>
        <authorList>
            <person name="Schaefer M."/>
            <person name="Braeuer A.U."/>
            <person name="Savaskan N.E."/>
            <person name="Rathjen F.G."/>
            <person name="Bruemmendorf T."/>
        </authorList>
    </citation>
    <scope>NUCLEOTIDE SEQUENCE [MRNA]</scope>
    <scope>TISSUE SPECIFICITY</scope>
    <scope>FUNCTION</scope>
    <source>
        <strain>BALB/cJ</strain>
        <tissue>Brain</tissue>
    </source>
</reference>
<reference key="2">
    <citation type="journal article" date="2005" name="Science">
        <title>The transcriptional landscape of the mammalian genome.</title>
        <authorList>
            <person name="Carninci P."/>
            <person name="Kasukawa T."/>
            <person name="Katayama S."/>
            <person name="Gough J."/>
            <person name="Frith M.C."/>
            <person name="Maeda N."/>
            <person name="Oyama R."/>
            <person name="Ravasi T."/>
            <person name="Lenhard B."/>
            <person name="Wells C."/>
            <person name="Kodzius R."/>
            <person name="Shimokawa K."/>
            <person name="Bajic V.B."/>
            <person name="Brenner S.E."/>
            <person name="Batalov S."/>
            <person name="Forrest A.R."/>
            <person name="Zavolan M."/>
            <person name="Davis M.J."/>
            <person name="Wilming L.G."/>
            <person name="Aidinis V."/>
            <person name="Allen J.E."/>
            <person name="Ambesi-Impiombato A."/>
            <person name="Apweiler R."/>
            <person name="Aturaliya R.N."/>
            <person name="Bailey T.L."/>
            <person name="Bansal M."/>
            <person name="Baxter L."/>
            <person name="Beisel K.W."/>
            <person name="Bersano T."/>
            <person name="Bono H."/>
            <person name="Chalk A.M."/>
            <person name="Chiu K.P."/>
            <person name="Choudhary V."/>
            <person name="Christoffels A."/>
            <person name="Clutterbuck D.R."/>
            <person name="Crowe M.L."/>
            <person name="Dalla E."/>
            <person name="Dalrymple B.P."/>
            <person name="de Bono B."/>
            <person name="Della Gatta G."/>
            <person name="di Bernardo D."/>
            <person name="Down T."/>
            <person name="Engstrom P."/>
            <person name="Fagiolini M."/>
            <person name="Faulkner G."/>
            <person name="Fletcher C.F."/>
            <person name="Fukushima T."/>
            <person name="Furuno M."/>
            <person name="Futaki S."/>
            <person name="Gariboldi M."/>
            <person name="Georgii-Hemming P."/>
            <person name="Gingeras T.R."/>
            <person name="Gojobori T."/>
            <person name="Green R.E."/>
            <person name="Gustincich S."/>
            <person name="Harbers M."/>
            <person name="Hayashi Y."/>
            <person name="Hensch T.K."/>
            <person name="Hirokawa N."/>
            <person name="Hill D."/>
            <person name="Huminiecki L."/>
            <person name="Iacono M."/>
            <person name="Ikeo K."/>
            <person name="Iwama A."/>
            <person name="Ishikawa T."/>
            <person name="Jakt M."/>
            <person name="Kanapin A."/>
            <person name="Katoh M."/>
            <person name="Kawasawa Y."/>
            <person name="Kelso J."/>
            <person name="Kitamura H."/>
            <person name="Kitano H."/>
            <person name="Kollias G."/>
            <person name="Krishnan S.P."/>
            <person name="Kruger A."/>
            <person name="Kummerfeld S.K."/>
            <person name="Kurochkin I.V."/>
            <person name="Lareau L.F."/>
            <person name="Lazarevic D."/>
            <person name="Lipovich L."/>
            <person name="Liu J."/>
            <person name="Liuni S."/>
            <person name="McWilliam S."/>
            <person name="Madan Babu M."/>
            <person name="Madera M."/>
            <person name="Marchionni L."/>
            <person name="Matsuda H."/>
            <person name="Matsuzawa S."/>
            <person name="Miki H."/>
            <person name="Mignone F."/>
            <person name="Miyake S."/>
            <person name="Morris K."/>
            <person name="Mottagui-Tabar S."/>
            <person name="Mulder N."/>
            <person name="Nakano N."/>
            <person name="Nakauchi H."/>
            <person name="Ng P."/>
            <person name="Nilsson R."/>
            <person name="Nishiguchi S."/>
            <person name="Nishikawa S."/>
            <person name="Nori F."/>
            <person name="Ohara O."/>
            <person name="Okazaki Y."/>
            <person name="Orlando V."/>
            <person name="Pang K.C."/>
            <person name="Pavan W.J."/>
            <person name="Pavesi G."/>
            <person name="Pesole G."/>
            <person name="Petrovsky N."/>
            <person name="Piazza S."/>
            <person name="Reed J."/>
            <person name="Reid J.F."/>
            <person name="Ring B.Z."/>
            <person name="Ringwald M."/>
            <person name="Rost B."/>
            <person name="Ruan Y."/>
            <person name="Salzberg S.L."/>
            <person name="Sandelin A."/>
            <person name="Schneider C."/>
            <person name="Schoenbach C."/>
            <person name="Sekiguchi K."/>
            <person name="Semple C.A."/>
            <person name="Seno S."/>
            <person name="Sessa L."/>
            <person name="Sheng Y."/>
            <person name="Shibata Y."/>
            <person name="Shimada H."/>
            <person name="Shimada K."/>
            <person name="Silva D."/>
            <person name="Sinclair B."/>
            <person name="Sperling S."/>
            <person name="Stupka E."/>
            <person name="Sugiura K."/>
            <person name="Sultana R."/>
            <person name="Takenaka Y."/>
            <person name="Taki K."/>
            <person name="Tammoja K."/>
            <person name="Tan S.L."/>
            <person name="Tang S."/>
            <person name="Taylor M.S."/>
            <person name="Tegner J."/>
            <person name="Teichmann S.A."/>
            <person name="Ueda H.R."/>
            <person name="van Nimwegen E."/>
            <person name="Verardo R."/>
            <person name="Wei C.L."/>
            <person name="Yagi K."/>
            <person name="Yamanishi H."/>
            <person name="Zabarovsky E."/>
            <person name="Zhu S."/>
            <person name="Zimmer A."/>
            <person name="Hide W."/>
            <person name="Bult C."/>
            <person name="Grimmond S.M."/>
            <person name="Teasdale R.D."/>
            <person name="Liu E.T."/>
            <person name="Brusic V."/>
            <person name="Quackenbush J."/>
            <person name="Wahlestedt C."/>
            <person name="Mattick J.S."/>
            <person name="Hume D.A."/>
            <person name="Kai C."/>
            <person name="Sasaki D."/>
            <person name="Tomaru Y."/>
            <person name="Fukuda S."/>
            <person name="Kanamori-Katayama M."/>
            <person name="Suzuki M."/>
            <person name="Aoki J."/>
            <person name="Arakawa T."/>
            <person name="Iida J."/>
            <person name="Imamura K."/>
            <person name="Itoh M."/>
            <person name="Kato T."/>
            <person name="Kawaji H."/>
            <person name="Kawagashira N."/>
            <person name="Kawashima T."/>
            <person name="Kojima M."/>
            <person name="Kondo S."/>
            <person name="Konno H."/>
            <person name="Nakano K."/>
            <person name="Ninomiya N."/>
            <person name="Nishio T."/>
            <person name="Okada M."/>
            <person name="Plessy C."/>
            <person name="Shibata K."/>
            <person name="Shiraki T."/>
            <person name="Suzuki S."/>
            <person name="Tagami M."/>
            <person name="Waki K."/>
            <person name="Watahiki A."/>
            <person name="Okamura-Oho Y."/>
            <person name="Suzuki H."/>
            <person name="Kawai J."/>
            <person name="Hayashizaki Y."/>
        </authorList>
    </citation>
    <scope>NUCLEOTIDE SEQUENCE [LARGE SCALE MRNA]</scope>
    <source>
        <strain>C57BL/6J</strain>
        <tissue>Heart</tissue>
    </source>
</reference>
<reference key="3">
    <citation type="journal article" date="2003" name="DNA Res.">
        <title>Prediction of the coding sequences of mouse homologues of KIAA gene: II. The complete nucleotide sequences of 400 mouse KIAA-homologous cDNAs identified by screening of terminal sequences of cDNA clones randomly sampled from size-fractionated libraries.</title>
        <authorList>
            <person name="Okazaki N."/>
            <person name="Kikuno R."/>
            <person name="Ohara R."/>
            <person name="Inamoto S."/>
            <person name="Aizawa H."/>
            <person name="Yuasa S."/>
            <person name="Nakajima D."/>
            <person name="Nagase T."/>
            <person name="Ohara O."/>
            <person name="Koga H."/>
        </authorList>
    </citation>
    <scope>NUCLEOTIDE SEQUENCE [LARGE SCALE MRNA] OF 87-348</scope>
    <source>
        <tissue>Brain</tissue>
    </source>
</reference>
<reference key="4">
    <citation type="submission" date="2003-10" db="EMBL/GenBank/DDBJ databases">
        <authorList>
            <person name="Okazaki N."/>
            <person name="Kikuno R."/>
            <person name="Nagase T."/>
            <person name="Ohara O."/>
            <person name="Koga H."/>
        </authorList>
    </citation>
    <scope>SEQUENCE REVISION</scope>
</reference>
<reference key="5">
    <citation type="journal article" date="2008" name="J. Proteome Res.">
        <title>Large-scale identification and evolution indexing of tyrosine phosphorylation sites from murine brain.</title>
        <authorList>
            <person name="Ballif B.A."/>
            <person name="Carey G.R."/>
            <person name="Sunyaev S.R."/>
            <person name="Gygi S.P."/>
        </authorList>
    </citation>
    <scope>PHOSPHORYLATION [LARGE SCALE ANALYSIS] AT TYR-181</scope>
    <scope>IDENTIFICATION BY MASS SPECTROMETRY [LARGE SCALE ANALYSIS]</scope>
    <source>
        <tissue>Brain</tissue>
    </source>
</reference>
<reference key="6">
    <citation type="journal article" date="2010" name="Cell">
        <title>A tissue-specific atlas of mouse protein phosphorylation and expression.</title>
        <authorList>
            <person name="Huttlin E.L."/>
            <person name="Jedrychowski M.P."/>
            <person name="Elias J.E."/>
            <person name="Goswami T."/>
            <person name="Rad R."/>
            <person name="Beausoleil S.A."/>
            <person name="Villen J."/>
            <person name="Haas W."/>
            <person name="Sowa M.E."/>
            <person name="Gygi S.P."/>
        </authorList>
    </citation>
    <scope>IDENTIFICATION BY MASS SPECTROMETRY [LARGE SCALE ANALYSIS]</scope>
    <source>
        <tissue>Brain</tissue>
        <tissue>Brown adipose tissue</tissue>
    </source>
</reference>
<comment type="function">
    <text evidence="5">May be involved in cell-adhesion. May function as a trans-neural growth-promoting factor in regenerative axon sprouting in the mammalian brain.</text>
</comment>
<comment type="subcellular location">
    <subcellularLocation>
        <location evidence="1">Cell membrane</location>
        <topology evidence="1">Lipid-anchor</topology>
        <topology evidence="1">GPI-anchor</topology>
    </subcellularLocation>
</comment>
<comment type="tissue specificity">
    <text evidence="5">Expressed in brain.</text>
</comment>
<comment type="similarity">
    <text evidence="6">Belongs to the immunoglobulin superfamily. IgLON family.</text>
</comment>
<feature type="signal peptide" evidence="1">
    <location>
        <begin position="1"/>
        <end position="31"/>
    </location>
</feature>
<feature type="chain" id="PRO_0000015039" description="Neuronal growth regulator 1">
    <location>
        <begin position="32"/>
        <end position="318"/>
    </location>
</feature>
<feature type="propeptide" id="PRO_0000015040" description="Removed in mature form" evidence="3">
    <location>
        <begin position="319"/>
        <end position="348"/>
    </location>
</feature>
<feature type="domain" description="Ig-like C2-type 1">
    <location>
        <begin position="32"/>
        <end position="128"/>
    </location>
</feature>
<feature type="domain" description="Ig-like C2-type 2">
    <location>
        <begin position="133"/>
        <end position="215"/>
    </location>
</feature>
<feature type="domain" description="Ig-like C2-type 3">
    <location>
        <begin position="219"/>
        <end position="307"/>
    </location>
</feature>
<feature type="modified residue" description="Phosphotyrosine" evidence="7">
    <location>
        <position position="181"/>
    </location>
</feature>
<feature type="lipid moiety-binding region" description="GPI-anchor amidated glycine" evidence="2">
    <location>
        <position position="318"/>
    </location>
</feature>
<feature type="glycosylation site" description="N-linked (GlcNAc...) asparagine" evidence="3">
    <location>
        <position position="67"/>
    </location>
</feature>
<feature type="glycosylation site" description="N-linked (GlcNAc...) asparagine" evidence="3">
    <location>
        <position position="149"/>
    </location>
</feature>
<feature type="glycosylation site" description="N-linked (GlcNAc...) asparagine" evidence="3">
    <location>
        <position position="269"/>
    </location>
</feature>
<feature type="glycosylation site" description="N-linked (GlcNAc...) asparagine" evidence="3">
    <location>
        <position position="280"/>
    </location>
</feature>
<feature type="glycosylation site" description="N-linked (GlcNAc...) asparagine" evidence="3">
    <location>
        <position position="288"/>
    </location>
</feature>
<feature type="glycosylation site" description="N-linked (GlcNAc...) asparagine" evidence="3">
    <location>
        <position position="301"/>
    </location>
</feature>
<feature type="disulfide bond" evidence="4">
    <location>
        <begin position="54"/>
        <end position="112"/>
    </location>
</feature>
<feature type="disulfide bond" evidence="4">
    <location>
        <begin position="154"/>
        <end position="197"/>
    </location>
</feature>
<feature type="disulfide bond" evidence="4">
    <location>
        <begin position="239"/>
        <end position="291"/>
    </location>
</feature>
<protein>
    <recommendedName>
        <fullName>Neuronal growth regulator 1</fullName>
    </recommendedName>
    <alternativeName>
        <fullName>Kindred of IgLON</fullName>
        <shortName>Kilon</shortName>
    </alternativeName>
    <alternativeName>
        <fullName>Neurotractin</fullName>
    </alternativeName>
</protein>
<gene>
    <name type="primary">Negr1</name>
    <name type="synonym">Kiaa3001</name>
    <name type="synonym">Ntra</name>
</gene>
<keyword id="KW-0130">Cell adhesion</keyword>
<keyword id="KW-1003">Cell membrane</keyword>
<keyword id="KW-1015">Disulfide bond</keyword>
<keyword id="KW-0325">Glycoprotein</keyword>
<keyword id="KW-0336">GPI-anchor</keyword>
<keyword id="KW-0393">Immunoglobulin domain</keyword>
<keyword id="KW-0449">Lipoprotein</keyword>
<keyword id="KW-0472">Membrane</keyword>
<keyword id="KW-0597">Phosphoprotein</keyword>
<keyword id="KW-1185">Reference proteome</keyword>
<keyword id="KW-0677">Repeat</keyword>
<keyword id="KW-0732">Signal</keyword>
<proteinExistence type="evidence at protein level"/>
<organism>
    <name type="scientific">Mus musculus</name>
    <name type="common">Mouse</name>
    <dbReference type="NCBI Taxonomy" id="10090"/>
    <lineage>
        <taxon>Eukaryota</taxon>
        <taxon>Metazoa</taxon>
        <taxon>Chordata</taxon>
        <taxon>Craniata</taxon>
        <taxon>Vertebrata</taxon>
        <taxon>Euteleostomi</taxon>
        <taxon>Mammalia</taxon>
        <taxon>Eutheria</taxon>
        <taxon>Euarchontoglires</taxon>
        <taxon>Glires</taxon>
        <taxon>Rodentia</taxon>
        <taxon>Myomorpha</taxon>
        <taxon>Muroidea</taxon>
        <taxon>Muridae</taxon>
        <taxon>Murinae</taxon>
        <taxon>Mus</taxon>
        <taxon>Mus</taxon>
    </lineage>
</organism>
<dbReference type="EMBL" id="AJ487032">
    <property type="protein sequence ID" value="CAD31699.1"/>
    <property type="molecule type" value="mRNA"/>
</dbReference>
<dbReference type="EMBL" id="AK142298">
    <property type="protein sequence ID" value="BAE25018.1"/>
    <property type="molecule type" value="mRNA"/>
</dbReference>
<dbReference type="EMBL" id="AK147253">
    <property type="protein sequence ID" value="BAE27799.1"/>
    <property type="molecule type" value="mRNA"/>
</dbReference>
<dbReference type="EMBL" id="AK122576">
    <property type="protein sequence ID" value="BAC65858.2"/>
    <property type="molecule type" value="mRNA"/>
</dbReference>
<dbReference type="CCDS" id="CCDS17930.1"/>
<dbReference type="RefSeq" id="NP_001034183.1">
    <property type="nucleotide sequence ID" value="NM_001039094.3"/>
</dbReference>
<dbReference type="RefSeq" id="NP_796248.1">
    <property type="nucleotide sequence ID" value="NM_177274.4"/>
</dbReference>
<dbReference type="SMR" id="Q80Z24"/>
<dbReference type="BioGRID" id="236331">
    <property type="interactions" value="22"/>
</dbReference>
<dbReference type="FunCoup" id="Q80Z24">
    <property type="interactions" value="585"/>
</dbReference>
<dbReference type="IntAct" id="Q80Z24">
    <property type="interactions" value="1"/>
</dbReference>
<dbReference type="MINT" id="Q80Z24"/>
<dbReference type="STRING" id="10090.ENSMUSP00000073664"/>
<dbReference type="GlyConnect" id="2550">
    <property type="glycosylation" value="7 N-Linked glycans (4 sites)"/>
</dbReference>
<dbReference type="GlyCosmos" id="Q80Z24">
    <property type="glycosylation" value="6 sites, 7 glycans"/>
</dbReference>
<dbReference type="GlyGen" id="Q80Z24">
    <property type="glycosylation" value="8 sites, 12 N-linked glycans (5 sites), 1 O-linked glycan (1 site)"/>
</dbReference>
<dbReference type="iPTMnet" id="Q80Z24"/>
<dbReference type="PhosphoSitePlus" id="Q80Z24"/>
<dbReference type="SwissPalm" id="Q80Z24"/>
<dbReference type="PaxDb" id="10090-ENSMUSP00000073664"/>
<dbReference type="PeptideAtlas" id="Q80Z24"/>
<dbReference type="ProteomicsDB" id="252878"/>
<dbReference type="Pumba" id="Q80Z24"/>
<dbReference type="Antibodypedia" id="2206">
    <property type="antibodies" value="196 antibodies from 30 providers"/>
</dbReference>
<dbReference type="DNASU" id="320840"/>
<dbReference type="Ensembl" id="ENSMUST00000074015.11">
    <property type="protein sequence ID" value="ENSMUSP00000073664.5"/>
    <property type="gene ID" value="ENSMUSG00000040037.14"/>
</dbReference>
<dbReference type="GeneID" id="320840"/>
<dbReference type="KEGG" id="mmu:320840"/>
<dbReference type="UCSC" id="uc008rvc.2">
    <property type="organism name" value="mouse"/>
</dbReference>
<dbReference type="AGR" id="MGI:2444846"/>
<dbReference type="CTD" id="257194"/>
<dbReference type="MGI" id="MGI:2444846">
    <property type="gene designation" value="Negr1"/>
</dbReference>
<dbReference type="VEuPathDB" id="HostDB:ENSMUSG00000040037"/>
<dbReference type="eggNOG" id="KOG3510">
    <property type="taxonomic scope" value="Eukaryota"/>
</dbReference>
<dbReference type="GeneTree" id="ENSGT00940000159289"/>
<dbReference type="HOGENOM" id="CLU_027228_2_3_1"/>
<dbReference type="InParanoid" id="Q80Z24"/>
<dbReference type="OMA" id="CLAISME"/>
<dbReference type="OrthoDB" id="6159398at2759"/>
<dbReference type="PhylomeDB" id="Q80Z24"/>
<dbReference type="TreeFam" id="TF351104"/>
<dbReference type="Reactome" id="R-MMU-163125">
    <property type="pathway name" value="Post-translational modification: synthesis of GPI-anchored proteins"/>
</dbReference>
<dbReference type="BioGRID-ORCS" id="320840">
    <property type="hits" value="2 hits in 77 CRISPR screens"/>
</dbReference>
<dbReference type="CD-CODE" id="CE726F99">
    <property type="entry name" value="Postsynaptic density"/>
</dbReference>
<dbReference type="ChiTaRS" id="Negr1">
    <property type="organism name" value="mouse"/>
</dbReference>
<dbReference type="PRO" id="PR:Q80Z24"/>
<dbReference type="Proteomes" id="UP000000589">
    <property type="component" value="Chromosome 3"/>
</dbReference>
<dbReference type="RNAct" id="Q80Z24">
    <property type="molecule type" value="protein"/>
</dbReference>
<dbReference type="Bgee" id="ENSMUSG00000040037">
    <property type="expression patterns" value="Expressed in piriform cortex and 192 other cell types or tissues"/>
</dbReference>
<dbReference type="ExpressionAtlas" id="Q80Z24">
    <property type="expression patterns" value="baseline and differential"/>
</dbReference>
<dbReference type="GO" id="GO:0030425">
    <property type="term" value="C:dendrite"/>
    <property type="evidence" value="ECO:0007669"/>
    <property type="project" value="Ensembl"/>
</dbReference>
<dbReference type="GO" id="GO:0005770">
    <property type="term" value="C:late endosome"/>
    <property type="evidence" value="ECO:0000266"/>
    <property type="project" value="MGI"/>
</dbReference>
<dbReference type="GO" id="GO:0043025">
    <property type="term" value="C:neuronal cell body"/>
    <property type="evidence" value="ECO:0007669"/>
    <property type="project" value="Ensembl"/>
</dbReference>
<dbReference type="GO" id="GO:0005886">
    <property type="term" value="C:plasma membrane"/>
    <property type="evidence" value="ECO:0000314"/>
    <property type="project" value="MGI"/>
</dbReference>
<dbReference type="GO" id="GO:0014069">
    <property type="term" value="C:postsynaptic density"/>
    <property type="evidence" value="ECO:0007669"/>
    <property type="project" value="Ensembl"/>
</dbReference>
<dbReference type="GO" id="GO:0098552">
    <property type="term" value="C:side of membrane"/>
    <property type="evidence" value="ECO:0007669"/>
    <property type="project" value="UniProtKB-KW"/>
</dbReference>
<dbReference type="GO" id="GO:0044325">
    <property type="term" value="F:transmembrane transporter binding"/>
    <property type="evidence" value="ECO:0000266"/>
    <property type="project" value="MGI"/>
</dbReference>
<dbReference type="GO" id="GO:0007420">
    <property type="term" value="P:brain development"/>
    <property type="evidence" value="ECO:0000315"/>
    <property type="project" value="MGI"/>
</dbReference>
<dbReference type="GO" id="GO:0098609">
    <property type="term" value="P:cell-cell adhesion"/>
    <property type="evidence" value="ECO:0000314"/>
    <property type="project" value="MGI"/>
</dbReference>
<dbReference type="GO" id="GO:0042632">
    <property type="term" value="P:cholesterol homeostasis"/>
    <property type="evidence" value="ECO:0000315"/>
    <property type="project" value="MGI"/>
</dbReference>
<dbReference type="GO" id="GO:0045444">
    <property type="term" value="P:fat cell differentiation"/>
    <property type="evidence" value="ECO:0000315"/>
    <property type="project" value="MGI"/>
</dbReference>
<dbReference type="GO" id="GO:0007631">
    <property type="term" value="P:feeding behavior"/>
    <property type="evidence" value="ECO:0000315"/>
    <property type="project" value="MGI"/>
</dbReference>
<dbReference type="GO" id="GO:0140042">
    <property type="term" value="P:lipid droplet formation"/>
    <property type="evidence" value="ECO:0000315"/>
    <property type="project" value="MGI"/>
</dbReference>
<dbReference type="GO" id="GO:0007626">
    <property type="term" value="P:locomotory behavior"/>
    <property type="evidence" value="ECO:0000315"/>
    <property type="project" value="MGI"/>
</dbReference>
<dbReference type="GO" id="GO:0031175">
    <property type="term" value="P:neuron projection development"/>
    <property type="evidence" value="ECO:0000314"/>
    <property type="project" value="MGI"/>
</dbReference>
<dbReference type="GO" id="GO:0048812">
    <property type="term" value="P:neuron projection morphogenesis"/>
    <property type="evidence" value="ECO:0000315"/>
    <property type="project" value="MGI"/>
</dbReference>
<dbReference type="GO" id="GO:0050850">
    <property type="term" value="P:positive regulation of calcium-mediated signaling"/>
    <property type="evidence" value="ECO:0000315"/>
    <property type="project" value="MGI"/>
</dbReference>
<dbReference type="GO" id="GO:0010976">
    <property type="term" value="P:positive regulation of neuron projection development"/>
    <property type="evidence" value="ECO:0000314"/>
    <property type="project" value="MGI"/>
</dbReference>
<dbReference type="GO" id="GO:0046878">
    <property type="term" value="P:positive regulation of saliva secretion"/>
    <property type="evidence" value="ECO:0000315"/>
    <property type="project" value="MGI"/>
</dbReference>
<dbReference type="GO" id="GO:0044860">
    <property type="term" value="P:protein localization to plasma membrane raft"/>
    <property type="evidence" value="ECO:0000266"/>
    <property type="project" value="MGI"/>
</dbReference>
<dbReference type="GO" id="GO:0009306">
    <property type="term" value="P:protein secretion"/>
    <property type="evidence" value="ECO:0000266"/>
    <property type="project" value="MGI"/>
</dbReference>
<dbReference type="GO" id="GO:0031647">
    <property type="term" value="P:regulation of protein stability"/>
    <property type="evidence" value="ECO:0000266"/>
    <property type="project" value="MGI"/>
</dbReference>
<dbReference type="GO" id="GO:0051963">
    <property type="term" value="P:regulation of synapse assembly"/>
    <property type="evidence" value="ECO:0007669"/>
    <property type="project" value="Ensembl"/>
</dbReference>
<dbReference type="GO" id="GO:0060538">
    <property type="term" value="P:skeletal muscle organ development"/>
    <property type="evidence" value="ECO:0000315"/>
    <property type="project" value="MGI"/>
</dbReference>
<dbReference type="GO" id="GO:0035176">
    <property type="term" value="P:social behavior"/>
    <property type="evidence" value="ECO:0000315"/>
    <property type="project" value="MGI"/>
</dbReference>
<dbReference type="FunFam" id="2.60.40.10:FF:000013">
    <property type="entry name" value="cell adhesion molecule 1 isoform X1"/>
    <property type="match status" value="1"/>
</dbReference>
<dbReference type="FunFam" id="2.60.40.10:FF:000500">
    <property type="entry name" value="limbic system-associated membrane protein isoform X1"/>
    <property type="match status" value="1"/>
</dbReference>
<dbReference type="FunFam" id="2.60.40.10:FF:000113">
    <property type="entry name" value="Opioid-binding protein/cell adhesion molecule"/>
    <property type="match status" value="1"/>
</dbReference>
<dbReference type="Gene3D" id="2.60.40.10">
    <property type="entry name" value="Immunoglobulins"/>
    <property type="match status" value="3"/>
</dbReference>
<dbReference type="InterPro" id="IPR007110">
    <property type="entry name" value="Ig-like_dom"/>
</dbReference>
<dbReference type="InterPro" id="IPR036179">
    <property type="entry name" value="Ig-like_dom_sf"/>
</dbReference>
<dbReference type="InterPro" id="IPR013783">
    <property type="entry name" value="Ig-like_fold"/>
</dbReference>
<dbReference type="InterPro" id="IPR013098">
    <property type="entry name" value="Ig_I-set"/>
</dbReference>
<dbReference type="InterPro" id="IPR003599">
    <property type="entry name" value="Ig_sub"/>
</dbReference>
<dbReference type="InterPro" id="IPR003598">
    <property type="entry name" value="Ig_sub2"/>
</dbReference>
<dbReference type="InterPro" id="IPR050876">
    <property type="entry name" value="IgLON_domain"/>
</dbReference>
<dbReference type="PANTHER" id="PTHR42757">
    <property type="entry name" value="IGLON FAMILY OF IMMUNOGLOBULIN SUPERFAMILY-RELATED"/>
    <property type="match status" value="1"/>
</dbReference>
<dbReference type="PANTHER" id="PTHR42757:SF6">
    <property type="entry name" value="NEURONAL GROWTH REGULATOR 1"/>
    <property type="match status" value="1"/>
</dbReference>
<dbReference type="Pfam" id="PF07679">
    <property type="entry name" value="I-set"/>
    <property type="match status" value="1"/>
</dbReference>
<dbReference type="Pfam" id="PF13927">
    <property type="entry name" value="Ig_3"/>
    <property type="match status" value="2"/>
</dbReference>
<dbReference type="SMART" id="SM00409">
    <property type="entry name" value="IG"/>
    <property type="match status" value="3"/>
</dbReference>
<dbReference type="SMART" id="SM00408">
    <property type="entry name" value="IGc2"/>
    <property type="match status" value="3"/>
</dbReference>
<dbReference type="SUPFAM" id="SSF48726">
    <property type="entry name" value="Immunoglobulin"/>
    <property type="match status" value="3"/>
</dbReference>
<dbReference type="PROSITE" id="PS50835">
    <property type="entry name" value="IG_LIKE"/>
    <property type="match status" value="3"/>
</dbReference>
<evidence type="ECO:0000250" key="1"/>
<evidence type="ECO:0000250" key="2">
    <source>
        <dbReference type="UniProtKB" id="Q7Z3B1"/>
    </source>
</evidence>
<evidence type="ECO:0000255" key="3"/>
<evidence type="ECO:0000255" key="4">
    <source>
        <dbReference type="PROSITE-ProRule" id="PRU00114"/>
    </source>
</evidence>
<evidence type="ECO:0000269" key="5">
    <source>
    </source>
</evidence>
<evidence type="ECO:0000305" key="6"/>
<evidence type="ECO:0007744" key="7">
    <source>
    </source>
</evidence>
<sequence>MVLLAQGACCSNQWLAAVLLSLCSCLPAGQSVDFPWAAVDNMLVRKGDTAVLRCYLEDGASKGAWLNRSSIIFAGGDKWSVDPRVSISTLNKRDYSLQIQNVDVTDDGPYTCSVQTQHTPRTMQVHLTVQVPPKIYDISNDMTINEGTNVTLTCLATGKPEPVISWRHISPSAKPFENGQYLDIYGITRDQAGEYECSAENDVSFPDVKKVRVIVNFAPTIQEIKSGTVTPGRSGLIRCEGAGVPPPAFEWYKGEKRLFNGQQGIIIQNFSTRSILTVTNVTQEHFGNYTCVAANKLGTTNASLPLNPPSTAQYGITGSACDLFSCWSLALTLSSVISIFYLKNAILQ</sequence>
<name>NEGR1_MOUSE</name>